<dbReference type="EC" id="1.4.3.2" evidence="3"/>
<dbReference type="EMBL" id="DQ464267">
    <property type="protein sequence ID" value="ABG26996.1"/>
    <property type="molecule type" value="mRNA"/>
</dbReference>
<dbReference type="SMR" id="B0VXW0"/>
<dbReference type="GO" id="GO:0005576">
    <property type="term" value="C:extracellular region"/>
    <property type="evidence" value="ECO:0007669"/>
    <property type="project" value="UniProtKB-SubCell"/>
</dbReference>
<dbReference type="GO" id="GO:0001716">
    <property type="term" value="F:L-amino-acid oxidase activity"/>
    <property type="evidence" value="ECO:0007669"/>
    <property type="project" value="UniProtKB-EC"/>
</dbReference>
<dbReference type="GO" id="GO:0090729">
    <property type="term" value="F:toxin activity"/>
    <property type="evidence" value="ECO:0007669"/>
    <property type="project" value="UniProtKB-KW"/>
</dbReference>
<dbReference type="GO" id="GO:0009063">
    <property type="term" value="P:amino acid catabolic process"/>
    <property type="evidence" value="ECO:0007669"/>
    <property type="project" value="TreeGrafter"/>
</dbReference>
<dbReference type="GO" id="GO:0006915">
    <property type="term" value="P:apoptotic process"/>
    <property type="evidence" value="ECO:0007669"/>
    <property type="project" value="UniProtKB-KW"/>
</dbReference>
<dbReference type="GO" id="GO:0042742">
    <property type="term" value="P:defense response to bacterium"/>
    <property type="evidence" value="ECO:0007669"/>
    <property type="project" value="UniProtKB-KW"/>
</dbReference>
<dbReference type="GO" id="GO:0031640">
    <property type="term" value="P:killing of cells of another organism"/>
    <property type="evidence" value="ECO:0007669"/>
    <property type="project" value="UniProtKB-KW"/>
</dbReference>
<dbReference type="FunFam" id="1.10.405.10:FF:000004">
    <property type="entry name" value="Amine oxidase"/>
    <property type="match status" value="1"/>
</dbReference>
<dbReference type="FunFam" id="3.50.50.60:FF:000450">
    <property type="entry name" value="Amine oxidase"/>
    <property type="match status" value="1"/>
</dbReference>
<dbReference type="Gene3D" id="3.90.660.10">
    <property type="match status" value="1"/>
</dbReference>
<dbReference type="Gene3D" id="3.50.50.60">
    <property type="entry name" value="FAD/NAD(P)-binding domain"/>
    <property type="match status" value="1"/>
</dbReference>
<dbReference type="Gene3D" id="1.10.405.10">
    <property type="entry name" value="Guanine Nucleotide Dissociation Inhibitor, domain 1"/>
    <property type="match status" value="1"/>
</dbReference>
<dbReference type="InterPro" id="IPR002937">
    <property type="entry name" value="Amino_oxidase"/>
</dbReference>
<dbReference type="InterPro" id="IPR036188">
    <property type="entry name" value="FAD/NAD-bd_sf"/>
</dbReference>
<dbReference type="InterPro" id="IPR050281">
    <property type="entry name" value="Flavin_monoamine_oxidase"/>
</dbReference>
<dbReference type="PANTHER" id="PTHR10742:SF355">
    <property type="entry name" value="AMINE OXIDASE"/>
    <property type="match status" value="1"/>
</dbReference>
<dbReference type="PANTHER" id="PTHR10742">
    <property type="entry name" value="FLAVIN MONOAMINE OXIDASE"/>
    <property type="match status" value="1"/>
</dbReference>
<dbReference type="Pfam" id="PF01593">
    <property type="entry name" value="Amino_oxidase"/>
    <property type="match status" value="1"/>
</dbReference>
<dbReference type="SUPFAM" id="SSF54373">
    <property type="entry name" value="FAD-linked reductases, C-terminal domain"/>
    <property type="match status" value="1"/>
</dbReference>
<dbReference type="SUPFAM" id="SSF51905">
    <property type="entry name" value="FAD/NAD(P)-binding domain"/>
    <property type="match status" value="1"/>
</dbReference>
<reference key="1">
    <citation type="journal article" date="2007" name="BMC Mol. Biol.">
        <title>The venom gland transcriptome of the Desert Massasauga rattlesnake (Sistrurus catenatus edwardsii): towards an understanding of venom composition among advanced snakes (Superfamily Colubroidea).</title>
        <authorList>
            <person name="Pahari S."/>
            <person name="Mackessy S.P."/>
            <person name="Kini R.M."/>
        </authorList>
    </citation>
    <scope>NUCLEOTIDE SEQUENCE [MRNA]</scope>
    <source>
        <tissue>Venom gland</tissue>
    </source>
</reference>
<accession>B0VXW0</accession>
<evidence type="ECO:0000250" key="1"/>
<evidence type="ECO:0000250" key="2">
    <source>
        <dbReference type="UniProtKB" id="P0CC17"/>
    </source>
</evidence>
<evidence type="ECO:0000250" key="3">
    <source>
        <dbReference type="UniProtKB" id="P81382"/>
    </source>
</evidence>
<evidence type="ECO:0000255" key="4"/>
<evidence type="ECO:0000303" key="5">
    <source>
    </source>
</evidence>
<evidence type="ECO:0000305" key="6"/>
<evidence type="ECO:0000305" key="7">
    <source>
    </source>
</evidence>
<protein>
    <recommendedName>
        <fullName>L-amino-acid oxidase</fullName>
        <shortName>LAAO</shortName>
        <shortName evidence="5">LAO</shortName>
        <ecNumber evidence="3">1.4.3.2</ecNumber>
    </recommendedName>
</protein>
<comment type="function">
    <text evidence="2">Catalyzes an oxidative deamination of predominantly hydrophobic and aromatic L-amino acids, thus producing hydrogen peroxide that may contribute to the diverse toxic effects of this enzyme. Exhibits diverse biological activities, such as hemorrhage, hemolysis, edema, apoptosis of vascular endothelial cells or tumor cell lines, antibacterial and antiparasitic activities, as well as regulation of platelet aggregation. Effects of snake L-amino oxidases on platelets are controversial, since they either induce aggregation or inhibit agonist-induced aggregation. These different effects are probably due to different experimental conditions.</text>
</comment>
<comment type="catalytic activity">
    <reaction evidence="3">
        <text>an L-alpha-amino acid + O2 + H2O = a 2-oxocarboxylate + H2O2 + NH4(+)</text>
        <dbReference type="Rhea" id="RHEA:13781"/>
        <dbReference type="ChEBI" id="CHEBI:15377"/>
        <dbReference type="ChEBI" id="CHEBI:15379"/>
        <dbReference type="ChEBI" id="CHEBI:16240"/>
        <dbReference type="ChEBI" id="CHEBI:28938"/>
        <dbReference type="ChEBI" id="CHEBI:35179"/>
        <dbReference type="ChEBI" id="CHEBI:59869"/>
        <dbReference type="EC" id="1.4.3.2"/>
    </reaction>
</comment>
<comment type="cofactor">
    <cofactor evidence="3">
        <name>FAD</name>
        <dbReference type="ChEBI" id="CHEBI:57692"/>
    </cofactor>
</comment>
<comment type="subunit">
    <text evidence="3">Homodimer; non-covalently linked.</text>
</comment>
<comment type="subcellular location">
    <subcellularLocation>
        <location evidence="7">Secreted</location>
    </subcellularLocation>
</comment>
<comment type="tissue specificity">
    <text evidence="7">Expressed by the venom gland.</text>
</comment>
<comment type="PTM">
    <text evidence="3">N-glycosylated.</text>
</comment>
<comment type="similarity">
    <text evidence="6">Belongs to the flavin monoamine oxidase family. FIG1 subfamily.</text>
</comment>
<proteinExistence type="evidence at transcript level"/>
<sequence>MNVFFMFSLLFLAALGSCADDRNPLEECFRETDYEEFLEIAKNGLTATSNPKRVVIVGAGMSGLSAAYVLAGAGHQVTVLEASERVGGRVRTYRKEDWYANLGPMRLPTKHRIVREYIKKFGLELNEFFQENDNAWYFIKNIRKRVQEVKNNPGLLKYPVKPSETGKSAGQLYEESLRKVVEELRSTNCKYILDKYDTYSTKEYLLKEGNLSPGAVDMIGDLLNEDSGYYVSFIESLKHDDIFGYEKRFDEIVGGMDQLPTSMYEAIKEKVQVHFNARVIEIQQNDREATVTYQTSANEMSSVTADYVIVCTTSRAARRIKFEPPLPPKKAHALRSVHYRSGTKIFLTCTKKFWEDEGIHGGKSTTDLPSRSIYYPNHNFTSGVGVIIAYGIGDDANFFQALDFKDCADIVINDLSLIHQLPKEDIQTFCHPSKIQRWSLDRYAMGGITTFTPYQFQHFSEALTAPFNRIYFAGEYTAQFHGWIDSTIKSGLTAARDVNRASENPSGIHLSNDNEF</sequence>
<feature type="signal peptide" evidence="4">
    <location>
        <begin position="1"/>
        <end position="18"/>
    </location>
</feature>
<feature type="chain" id="PRO_0000412605" description="L-amino-acid oxidase">
    <location>
        <begin position="19"/>
        <end position="516"/>
    </location>
</feature>
<feature type="binding site" evidence="3">
    <location>
        <begin position="61"/>
        <end position="62"/>
    </location>
    <ligand>
        <name>FAD</name>
        <dbReference type="ChEBI" id="CHEBI:57692"/>
    </ligand>
</feature>
<feature type="binding site" evidence="3">
    <location>
        <begin position="81"/>
        <end position="82"/>
    </location>
    <ligand>
        <name>FAD</name>
        <dbReference type="ChEBI" id="CHEBI:57692"/>
    </ligand>
</feature>
<feature type="binding site" evidence="3">
    <location>
        <position position="89"/>
    </location>
    <ligand>
        <name>FAD</name>
        <dbReference type="ChEBI" id="CHEBI:57692"/>
    </ligand>
</feature>
<feature type="binding site" evidence="3">
    <location>
        <begin position="103"/>
        <end position="106"/>
    </location>
    <ligand>
        <name>FAD</name>
        <dbReference type="ChEBI" id="CHEBI:57692"/>
    </ligand>
</feature>
<feature type="binding site" evidence="3">
    <location>
        <position position="106"/>
    </location>
    <ligand>
        <name>substrate</name>
    </ligand>
</feature>
<feature type="binding site" evidence="3">
    <location>
        <position position="239"/>
    </location>
    <ligand>
        <name>substrate</name>
    </ligand>
</feature>
<feature type="binding site" evidence="1">
    <location>
        <position position="279"/>
    </location>
    <ligand>
        <name>FAD</name>
        <dbReference type="ChEBI" id="CHEBI:57692"/>
    </ligand>
</feature>
<feature type="binding site" evidence="3">
    <location>
        <position position="390"/>
    </location>
    <ligand>
        <name>substrate</name>
    </ligand>
</feature>
<feature type="binding site" evidence="3">
    <location>
        <position position="475"/>
    </location>
    <ligand>
        <name>FAD</name>
        <dbReference type="ChEBI" id="CHEBI:57692"/>
    </ligand>
</feature>
<feature type="binding site" evidence="3">
    <location>
        <begin position="482"/>
        <end position="487"/>
    </location>
    <ligand>
        <name>FAD</name>
        <dbReference type="ChEBI" id="CHEBI:57692"/>
    </ligand>
</feature>
<feature type="binding site" evidence="3">
    <location>
        <begin position="482"/>
        <end position="483"/>
    </location>
    <ligand>
        <name>substrate</name>
    </ligand>
</feature>
<feature type="glycosylation site" description="N-linked (GlcNAc...) asparagine" evidence="4">
    <location>
        <position position="379"/>
    </location>
</feature>
<feature type="disulfide bond" evidence="3">
    <location>
        <begin position="28"/>
        <end position="189"/>
    </location>
</feature>
<feature type="disulfide bond" evidence="3">
    <location>
        <begin position="349"/>
        <end position="430"/>
    </location>
</feature>
<organism>
    <name type="scientific">Sistrurus catenatus edwardsii</name>
    <name type="common">Desert massasauga</name>
    <name type="synonym">Crotalophorus edwardsii</name>
    <dbReference type="NCBI Taxonomy" id="8762"/>
    <lineage>
        <taxon>Eukaryota</taxon>
        <taxon>Metazoa</taxon>
        <taxon>Chordata</taxon>
        <taxon>Craniata</taxon>
        <taxon>Vertebrata</taxon>
        <taxon>Euteleostomi</taxon>
        <taxon>Lepidosauria</taxon>
        <taxon>Squamata</taxon>
        <taxon>Bifurcata</taxon>
        <taxon>Unidentata</taxon>
        <taxon>Episquamata</taxon>
        <taxon>Toxicofera</taxon>
        <taxon>Serpentes</taxon>
        <taxon>Colubroidea</taxon>
        <taxon>Viperidae</taxon>
        <taxon>Crotalinae</taxon>
        <taxon>Sistrurus</taxon>
    </lineage>
</organism>
<keyword id="KW-0044">Antibiotic</keyword>
<keyword id="KW-0929">Antimicrobial</keyword>
<keyword id="KW-0053">Apoptosis</keyword>
<keyword id="KW-0204">Cytolysis</keyword>
<keyword id="KW-1015">Disulfide bond</keyword>
<keyword id="KW-0274">FAD</keyword>
<keyword id="KW-0285">Flavoprotein</keyword>
<keyword id="KW-0325">Glycoprotein</keyword>
<keyword id="KW-0354">Hemolysis</keyword>
<keyword id="KW-1199">Hemostasis impairing toxin</keyword>
<keyword id="KW-0560">Oxidoreductase</keyword>
<keyword id="KW-0964">Secreted</keyword>
<keyword id="KW-0732">Signal</keyword>
<keyword id="KW-0800">Toxin</keyword>
<name>OXLA_SISCA</name>